<comment type="function">
    <text evidence="1">Catalyzes a mechanistically unusual reaction, the ATP-dependent insertion of CO2 between the N7 and N8 nitrogen atoms of 7,8-diaminopelargonic acid (DAPA, also called 7,8-diammoniononanoate) to form a ureido ring.</text>
</comment>
<comment type="catalytic activity">
    <reaction evidence="1">
        <text>(7R,8S)-7,8-diammoniononanoate + CO2 + ATP = (4R,5S)-dethiobiotin + ADP + phosphate + 3 H(+)</text>
        <dbReference type="Rhea" id="RHEA:15805"/>
        <dbReference type="ChEBI" id="CHEBI:15378"/>
        <dbReference type="ChEBI" id="CHEBI:16526"/>
        <dbReference type="ChEBI" id="CHEBI:30616"/>
        <dbReference type="ChEBI" id="CHEBI:43474"/>
        <dbReference type="ChEBI" id="CHEBI:149469"/>
        <dbReference type="ChEBI" id="CHEBI:149473"/>
        <dbReference type="ChEBI" id="CHEBI:456216"/>
        <dbReference type="EC" id="6.3.3.3"/>
    </reaction>
</comment>
<comment type="cofactor">
    <cofactor evidence="1">
        <name>Mg(2+)</name>
        <dbReference type="ChEBI" id="CHEBI:18420"/>
    </cofactor>
</comment>
<comment type="pathway">
    <text evidence="1">Cofactor biosynthesis; biotin biosynthesis; biotin from 7,8-diaminononanoate: step 1/2.</text>
</comment>
<comment type="subunit">
    <text evidence="1">Homodimer.</text>
</comment>
<comment type="subcellular location">
    <subcellularLocation>
        <location evidence="1">Cytoplasm</location>
    </subcellularLocation>
</comment>
<comment type="similarity">
    <text evidence="1">Belongs to the dethiobiotin synthetase family.</text>
</comment>
<proteinExistence type="inferred from homology"/>
<reference key="1">
    <citation type="journal article" date="2005" name="Science">
        <title>Life at depth: Photobacterium profundum genome sequence and expression analysis.</title>
        <authorList>
            <person name="Vezzi A."/>
            <person name="Campanaro S."/>
            <person name="D'Angelo M."/>
            <person name="Simonato F."/>
            <person name="Vitulo N."/>
            <person name="Lauro F.M."/>
            <person name="Cestaro A."/>
            <person name="Malacrida G."/>
            <person name="Simionati B."/>
            <person name="Cannata N."/>
            <person name="Romualdi C."/>
            <person name="Bartlett D.H."/>
            <person name="Valle G."/>
        </authorList>
    </citation>
    <scope>NUCLEOTIDE SEQUENCE [LARGE SCALE GENOMIC DNA]</scope>
    <source>
        <strain>ATCC BAA-1253 / SS9</strain>
    </source>
</reference>
<sequence length="220" mass="23770">MTNAFFLTGTDTEVGKTVASRAILHAAASANIKMAGYKPVASDSTPTDEGMRNSDALYIQDASVVELDYQEVNPYAFEAAISPHLAAEQEGQVIDFDVLSAGLEHLKSKSEAVLIEGAGGWRVPISHTDFLSSWVKREKLPVILVVGVKLGCLSHAILTAEAIKNDGLELVGWVANRINPGTENYADIIKMLEKNLPGKKMGEIPYMPALKNVTYQSILI</sequence>
<organism>
    <name type="scientific">Photobacterium profundum (strain SS9)</name>
    <dbReference type="NCBI Taxonomy" id="298386"/>
    <lineage>
        <taxon>Bacteria</taxon>
        <taxon>Pseudomonadati</taxon>
        <taxon>Pseudomonadota</taxon>
        <taxon>Gammaproteobacteria</taxon>
        <taxon>Vibrionales</taxon>
        <taxon>Vibrionaceae</taxon>
        <taxon>Photobacterium</taxon>
    </lineage>
</organism>
<feature type="chain" id="PRO_0000302539" description="ATP-dependent dethiobiotin synthetase BioD">
    <location>
        <begin position="1"/>
        <end position="220"/>
    </location>
</feature>
<feature type="active site" evidence="1">
    <location>
        <position position="38"/>
    </location>
</feature>
<feature type="binding site" evidence="1">
    <location>
        <begin position="13"/>
        <end position="18"/>
    </location>
    <ligand>
        <name>ATP</name>
        <dbReference type="ChEBI" id="CHEBI:30616"/>
    </ligand>
</feature>
<feature type="binding site" evidence="1">
    <location>
        <position position="17"/>
    </location>
    <ligand>
        <name>Mg(2+)</name>
        <dbReference type="ChEBI" id="CHEBI:18420"/>
    </ligand>
</feature>
<feature type="binding site" evidence="1">
    <location>
        <position position="42"/>
    </location>
    <ligand>
        <name>substrate</name>
    </ligand>
</feature>
<feature type="binding site" evidence="1">
    <location>
        <position position="55"/>
    </location>
    <ligand>
        <name>ATP</name>
        <dbReference type="ChEBI" id="CHEBI:30616"/>
    </ligand>
</feature>
<feature type="binding site" evidence="1">
    <location>
        <position position="55"/>
    </location>
    <ligand>
        <name>Mg(2+)</name>
        <dbReference type="ChEBI" id="CHEBI:18420"/>
    </ligand>
</feature>
<feature type="binding site" evidence="1">
    <location>
        <begin position="116"/>
        <end position="119"/>
    </location>
    <ligand>
        <name>ATP</name>
        <dbReference type="ChEBI" id="CHEBI:30616"/>
    </ligand>
</feature>
<feature type="binding site" evidence="1">
    <location>
        <position position="116"/>
    </location>
    <ligand>
        <name>Mg(2+)</name>
        <dbReference type="ChEBI" id="CHEBI:18420"/>
    </ligand>
</feature>
<feature type="binding site" evidence="1">
    <location>
        <begin position="176"/>
        <end position="177"/>
    </location>
    <ligand>
        <name>ATP</name>
        <dbReference type="ChEBI" id="CHEBI:30616"/>
    </ligand>
</feature>
<feature type="binding site" evidence="1">
    <location>
        <position position="212"/>
    </location>
    <ligand>
        <name>ATP</name>
        <dbReference type="ChEBI" id="CHEBI:30616"/>
    </ligand>
</feature>
<evidence type="ECO:0000255" key="1">
    <source>
        <dbReference type="HAMAP-Rule" id="MF_00336"/>
    </source>
</evidence>
<name>BIOD_PHOPR</name>
<protein>
    <recommendedName>
        <fullName evidence="1">ATP-dependent dethiobiotin synthetase BioD</fullName>
        <ecNumber evidence="1">6.3.3.3</ecNumber>
    </recommendedName>
    <alternativeName>
        <fullName evidence="1">DTB synthetase</fullName>
        <shortName evidence="1">DTBS</shortName>
    </alternativeName>
    <alternativeName>
        <fullName evidence="1">Dethiobiotin synthase</fullName>
    </alternativeName>
</protein>
<gene>
    <name evidence="1" type="primary">bioD</name>
    <name type="ordered locus">PBPRA2326</name>
</gene>
<keyword id="KW-0067">ATP-binding</keyword>
<keyword id="KW-0093">Biotin biosynthesis</keyword>
<keyword id="KW-0963">Cytoplasm</keyword>
<keyword id="KW-0436">Ligase</keyword>
<keyword id="KW-0460">Magnesium</keyword>
<keyword id="KW-0479">Metal-binding</keyword>
<keyword id="KW-0547">Nucleotide-binding</keyword>
<keyword id="KW-1185">Reference proteome</keyword>
<dbReference type="EC" id="6.3.3.3" evidence="1"/>
<dbReference type="EMBL" id="CR378670">
    <property type="protein sequence ID" value="CAG20711.1"/>
    <property type="molecule type" value="Genomic_DNA"/>
</dbReference>
<dbReference type="SMR" id="Q6LPR5"/>
<dbReference type="STRING" id="298386.PBPRA2326"/>
<dbReference type="KEGG" id="ppr:PBPRA2326"/>
<dbReference type="eggNOG" id="COG0132">
    <property type="taxonomic scope" value="Bacteria"/>
</dbReference>
<dbReference type="HOGENOM" id="CLU_072551_0_0_6"/>
<dbReference type="UniPathway" id="UPA00078">
    <property type="reaction ID" value="UER00161"/>
</dbReference>
<dbReference type="Proteomes" id="UP000000593">
    <property type="component" value="Chromosome 1"/>
</dbReference>
<dbReference type="GO" id="GO:0005829">
    <property type="term" value="C:cytosol"/>
    <property type="evidence" value="ECO:0007669"/>
    <property type="project" value="TreeGrafter"/>
</dbReference>
<dbReference type="GO" id="GO:0005524">
    <property type="term" value="F:ATP binding"/>
    <property type="evidence" value="ECO:0007669"/>
    <property type="project" value="UniProtKB-UniRule"/>
</dbReference>
<dbReference type="GO" id="GO:0004141">
    <property type="term" value="F:dethiobiotin synthase activity"/>
    <property type="evidence" value="ECO:0007669"/>
    <property type="project" value="UniProtKB-UniRule"/>
</dbReference>
<dbReference type="GO" id="GO:0000287">
    <property type="term" value="F:magnesium ion binding"/>
    <property type="evidence" value="ECO:0007669"/>
    <property type="project" value="UniProtKB-UniRule"/>
</dbReference>
<dbReference type="GO" id="GO:0009102">
    <property type="term" value="P:biotin biosynthetic process"/>
    <property type="evidence" value="ECO:0007669"/>
    <property type="project" value="UniProtKB-UniRule"/>
</dbReference>
<dbReference type="CDD" id="cd03109">
    <property type="entry name" value="DTBS"/>
    <property type="match status" value="1"/>
</dbReference>
<dbReference type="FunFam" id="3.40.50.300:FF:000292">
    <property type="entry name" value="ATP-dependent dethiobiotin synthetase BioD"/>
    <property type="match status" value="1"/>
</dbReference>
<dbReference type="Gene3D" id="3.40.50.300">
    <property type="entry name" value="P-loop containing nucleotide triphosphate hydrolases"/>
    <property type="match status" value="1"/>
</dbReference>
<dbReference type="HAMAP" id="MF_00336">
    <property type="entry name" value="BioD"/>
    <property type="match status" value="1"/>
</dbReference>
<dbReference type="InterPro" id="IPR004472">
    <property type="entry name" value="DTB_synth_BioD"/>
</dbReference>
<dbReference type="InterPro" id="IPR027417">
    <property type="entry name" value="P-loop_NTPase"/>
</dbReference>
<dbReference type="NCBIfam" id="TIGR00347">
    <property type="entry name" value="bioD"/>
    <property type="match status" value="1"/>
</dbReference>
<dbReference type="PANTHER" id="PTHR43210">
    <property type="entry name" value="DETHIOBIOTIN SYNTHETASE"/>
    <property type="match status" value="1"/>
</dbReference>
<dbReference type="PANTHER" id="PTHR43210:SF5">
    <property type="entry name" value="DETHIOBIOTIN SYNTHETASE"/>
    <property type="match status" value="1"/>
</dbReference>
<dbReference type="Pfam" id="PF13500">
    <property type="entry name" value="AAA_26"/>
    <property type="match status" value="1"/>
</dbReference>
<dbReference type="PIRSF" id="PIRSF006755">
    <property type="entry name" value="DTB_synth"/>
    <property type="match status" value="1"/>
</dbReference>
<dbReference type="SUPFAM" id="SSF52540">
    <property type="entry name" value="P-loop containing nucleoside triphosphate hydrolases"/>
    <property type="match status" value="1"/>
</dbReference>
<accession>Q6LPR5</accession>